<organismHost>
    <name type="scientific">Aves</name>
    <dbReference type="NCBI Taxonomy" id="8782"/>
</organismHost>
<organismHost>
    <name type="scientific">Cetacea</name>
    <name type="common">whales</name>
    <dbReference type="NCBI Taxonomy" id="9721"/>
</organismHost>
<organismHost>
    <name type="scientific">Homo sapiens</name>
    <name type="common">Human</name>
    <dbReference type="NCBI Taxonomy" id="9606"/>
</organismHost>
<organismHost>
    <name type="scientific">Phocidae</name>
    <name type="common">true seals</name>
    <dbReference type="NCBI Taxonomy" id="9709"/>
</organismHost>
<organismHost>
    <name type="scientific">Sus scrofa</name>
    <name type="common">Pig</name>
    <dbReference type="NCBI Taxonomy" id="9823"/>
</organismHost>
<feature type="chain" id="PRO_0000326370" description="Matrix protein 2">
    <location>
        <begin position="1"/>
        <end position="96"/>
    </location>
</feature>
<feature type="topological domain" description="Virion surface" evidence="1">
    <location>
        <begin position="1"/>
        <end position="22"/>
    </location>
</feature>
<feature type="transmembrane region" description="Helical; Signal-anchor for type III membrane protein" evidence="1">
    <location>
        <begin position="23"/>
        <end position="43"/>
    </location>
</feature>
<feature type="topological domain" description="Intravirion" evidence="1">
    <location>
        <begin position="44"/>
        <end position="96"/>
    </location>
</feature>
<feature type="region of interest" description="Disordered" evidence="2">
    <location>
        <begin position="60"/>
        <end position="88"/>
    </location>
</feature>
<feature type="compositionally biased region" description="Basic and acidic residues" evidence="2">
    <location>
        <begin position="71"/>
        <end position="80"/>
    </location>
</feature>
<feature type="site" description="Essential for channel activity, possibly by being protonated during channel activation, and by forming the channel gate and the selective filter" evidence="1">
    <location>
        <position position="37"/>
    </location>
</feature>
<feature type="site" description="Seems to be involved in pH gating" evidence="1">
    <location>
        <position position="41"/>
    </location>
</feature>
<feature type="modified residue" description="Phosphoserine; by host" evidence="1">
    <location>
        <position position="64"/>
    </location>
</feature>
<feature type="modified residue" description="Phosphoserine; by host" evidence="1">
    <location>
        <position position="93"/>
    </location>
</feature>
<feature type="lipid moiety-binding region" description="S-palmitoyl cysteine; by host" evidence="1">
    <location>
        <position position="50"/>
    </location>
</feature>
<feature type="glycosylation site" description="N-linked (GlcNAc...) asparagine; by host" evidence="1">
    <location>
        <position position="20"/>
    </location>
</feature>
<feature type="disulfide bond" description="Interchain (with C-17)" evidence="1">
    <location>
        <position position="17"/>
    </location>
</feature>
<feature type="disulfide bond" description="Interchain (with C-19)" evidence="1">
    <location>
        <position position="19"/>
    </location>
</feature>
<sequence>MSLLTEVETPIRNEWGCRCNDSSDPLVVAASIIGILHLILWILDRLFFKCIYRFFKHGLKRGPSTEGVPESMREEYRKEQQNAVDADDSHFVSIEL</sequence>
<reference key="1">
    <citation type="submission" date="2005-12" db="EMBL/GenBank/DDBJ databases">
        <title>The NIAID influenza genome sequencing project.</title>
        <authorList>
            <person name="Ghedin E."/>
            <person name="Spiro D."/>
            <person name="Miller N."/>
            <person name="Zaborsky J."/>
            <person name="Feldblyum T."/>
            <person name="Subbu V."/>
            <person name="Shumway M."/>
            <person name="Sparenborg J."/>
            <person name="Groveman L."/>
            <person name="Halpin R."/>
            <person name="Sitz J."/>
            <person name="Koo H."/>
            <person name="Salzberg S.L."/>
            <person name="Webster R.G."/>
            <person name="Hoffmann E."/>
            <person name="Krauss S."/>
            <person name="Naeve C."/>
            <person name="Bao Y."/>
            <person name="Bolotov P."/>
            <person name="Dernovoy D."/>
            <person name="Kiryutin B."/>
            <person name="Lipman D.J."/>
            <person name="Tatusova T."/>
        </authorList>
    </citation>
    <scope>NUCLEOTIDE SEQUENCE [GENOMIC RNA]</scope>
</reference>
<name>M2_I80A4</name>
<accession>Q2PI09</accession>
<dbReference type="EMBL" id="CY007620">
    <property type="protein sequence ID" value="ABC46567.1"/>
    <property type="molecule type" value="Genomic_RNA"/>
</dbReference>
<dbReference type="SMR" id="Q2PI09"/>
<dbReference type="GlyCosmos" id="Q2PI09">
    <property type="glycosylation" value="1 site, No reported glycans"/>
</dbReference>
<dbReference type="Proteomes" id="UP000008577">
    <property type="component" value="Genome"/>
</dbReference>
<dbReference type="GO" id="GO:0020002">
    <property type="term" value="C:host cell plasma membrane"/>
    <property type="evidence" value="ECO:0007669"/>
    <property type="project" value="UniProtKB-SubCell"/>
</dbReference>
<dbReference type="GO" id="GO:0016020">
    <property type="term" value="C:membrane"/>
    <property type="evidence" value="ECO:0007669"/>
    <property type="project" value="UniProtKB-UniRule"/>
</dbReference>
<dbReference type="GO" id="GO:0055036">
    <property type="term" value="C:virion membrane"/>
    <property type="evidence" value="ECO:0007669"/>
    <property type="project" value="UniProtKB-SubCell"/>
</dbReference>
<dbReference type="GO" id="GO:0005216">
    <property type="term" value="F:monoatomic ion channel activity"/>
    <property type="evidence" value="ECO:0007669"/>
    <property type="project" value="UniProtKB-UniRule"/>
</dbReference>
<dbReference type="GO" id="GO:0015078">
    <property type="term" value="F:proton transmembrane transporter activity"/>
    <property type="evidence" value="ECO:0007669"/>
    <property type="project" value="UniProtKB-UniRule"/>
</dbReference>
<dbReference type="GO" id="GO:0051259">
    <property type="term" value="P:protein complex oligomerization"/>
    <property type="evidence" value="ECO:0007669"/>
    <property type="project" value="UniProtKB-UniRule"/>
</dbReference>
<dbReference type="GO" id="GO:0044694">
    <property type="term" value="P:symbiont genome entry into host cell via pore formation in plasma membrane"/>
    <property type="evidence" value="ECO:0007669"/>
    <property type="project" value="UniProtKB-UniRule"/>
</dbReference>
<dbReference type="GO" id="GO:0140321">
    <property type="term" value="P:symbiont-mediated suppression of host autophagy"/>
    <property type="evidence" value="ECO:0007669"/>
    <property type="project" value="UniProtKB-KW"/>
</dbReference>
<dbReference type="Gene3D" id="6.10.250.1640">
    <property type="match status" value="1"/>
</dbReference>
<dbReference type="HAMAP" id="MF_04069">
    <property type="entry name" value="INFV_M2"/>
    <property type="match status" value="1"/>
</dbReference>
<dbReference type="InterPro" id="IPR002089">
    <property type="entry name" value="Flu_M2"/>
</dbReference>
<dbReference type="Pfam" id="PF00599">
    <property type="entry name" value="Flu_M2"/>
    <property type="match status" value="1"/>
</dbReference>
<keyword id="KW-0025">Alternative splicing</keyword>
<keyword id="KW-1015">Disulfide bond</keyword>
<keyword id="KW-0325">Glycoprotein</keyword>
<keyword id="KW-1032">Host cell membrane</keyword>
<keyword id="KW-1043">Host membrane</keyword>
<keyword id="KW-0945">Host-virus interaction</keyword>
<keyword id="KW-0375">Hydrogen ion transport</keyword>
<keyword id="KW-1083">Inhibition of host autophagy by virus</keyword>
<keyword id="KW-0407">Ion channel</keyword>
<keyword id="KW-0406">Ion transport</keyword>
<keyword id="KW-0449">Lipoprotein</keyword>
<keyword id="KW-0472">Membrane</keyword>
<keyword id="KW-0564">Palmitate</keyword>
<keyword id="KW-0597">Phosphoprotein</keyword>
<keyword id="KW-0735">Signal-anchor</keyword>
<keyword id="KW-0812">Transmembrane</keyword>
<keyword id="KW-1133">Transmembrane helix</keyword>
<keyword id="KW-0813">Transport</keyword>
<keyword id="KW-1182">Viral ion channel</keyword>
<keyword id="KW-0946">Virion</keyword>
<proteinExistence type="inferred from homology"/>
<organism>
    <name type="scientific">Influenza A virus (strain A/Memphis/4/1980 H3N2)</name>
    <dbReference type="NCBI Taxonomy" id="383578"/>
    <lineage>
        <taxon>Viruses</taxon>
        <taxon>Riboviria</taxon>
        <taxon>Orthornavirae</taxon>
        <taxon>Negarnaviricota</taxon>
        <taxon>Polyploviricotina</taxon>
        <taxon>Insthoviricetes</taxon>
        <taxon>Articulavirales</taxon>
        <taxon>Orthomyxoviridae</taxon>
        <taxon>Alphainfluenzavirus</taxon>
        <taxon>Alphainfluenzavirus influenzae</taxon>
        <taxon>Influenza A virus</taxon>
    </lineage>
</organism>
<gene>
    <name evidence="1" type="primary">M</name>
</gene>
<evidence type="ECO:0000255" key="1">
    <source>
        <dbReference type="HAMAP-Rule" id="MF_04069"/>
    </source>
</evidence>
<evidence type="ECO:0000256" key="2">
    <source>
        <dbReference type="SAM" id="MobiDB-lite"/>
    </source>
</evidence>
<protein>
    <recommendedName>
        <fullName evidence="1">Matrix protein 2</fullName>
    </recommendedName>
    <alternativeName>
        <fullName evidence="1">Proton channel protein M2</fullName>
    </alternativeName>
</protein>
<comment type="function">
    <text evidence="1">Forms a proton-selective ion channel that is necessary for the efficient release of the viral genome during virus entry. After attaching to the cell surface, the virion enters the cell by endocytosis. Acidification of the endosome triggers M2 ion channel activity. The influx of protons into virion interior is believed to disrupt interactions between the viral ribonucleoprotein (RNP), matrix protein 1 (M1), and lipid bilayers, thereby freeing the viral genome from interaction with viral proteins and enabling RNA segments to migrate to the host cell nucleus, where influenza virus RNA transcription and replication occur. Also plays a role in viral proteins secretory pathway. Elevates the intravesicular pH of normally acidic compartments, such as trans-Golgi network, preventing newly formed hemagglutinin from premature switching to the fusion-active conformation.</text>
</comment>
<comment type="activity regulation">
    <text>The M2 protein from most influenza A strains is inhibited by amantadine and rimantadine, resulting in viral uncoating incapacity. Emergence of amantadine-resistant variants is usually rapid.</text>
</comment>
<comment type="subunit">
    <text evidence="1">Homotetramer; composed of two disulfide-linked dimers held together by non-covalent interactions. May interact with matrix protein 1.</text>
</comment>
<comment type="subcellular location">
    <subcellularLocation>
        <location evidence="1">Virion membrane</location>
    </subcellularLocation>
    <subcellularLocation>
        <location evidence="1">Host apical cell membrane</location>
        <topology evidence="1">Single-pass type III membrane protein</topology>
    </subcellularLocation>
    <text evidence="1">Abundantly expressed at the apical plasma membrane in infected polarized epithelial cells, in close proximity to budding and assembled virions. Minor component of virions (only 16-20 molecules/virion).</text>
</comment>
<comment type="alternative products">
    <event type="alternative splicing"/>
    <isoform>
        <id>Q2PI09-1</id>
        <name>M2</name>
        <sequence type="displayed"/>
    </isoform>
    <isoform>
        <id>Q2PI08-1</id>
        <name>M1</name>
        <sequence type="external"/>
    </isoform>
    <text>Only the first 9 residues are shared by the 2 isoforms.</text>
</comment>
<comment type="domain">
    <text evidence="1">Cytoplasmic tail plays an important role in virion assembly and morphogenesis.</text>
</comment>
<comment type="miscellaneous">
    <text evidence="1">When the channel is activated, one or more imidazole moieties of His-37 probably become bi-protonated.</text>
</comment>
<comment type="similarity">
    <text evidence="1">Belongs to the influenza viruses matrix protein M2 family.</text>
</comment>